<sequence length="586" mass="65787">MKQSVSAEQIELKSSLPGSKKVYVDGPREGMKVPMREIEQSDTNGVPNPPIRVYDTSGPYTDPAYKVELEKGIPTPRHSWILERGDVEAYEGREVKPEDDGVKVASKHTPVFPQMDRKPLRAKQGANVTQMHYARNGIITSEMEYVAIREGVDPEFVRKEIAEGRAILPANINHPEAELMIIGRNFHVKVNANIGNSAVSSSIAEEVEKMTWATRWGADTIMDLSTGKNIHTTREWIIRNAPVPVGTVPIYQALEKVNGIAEDLTWEVYRDTLIEQAEQGVDYFTIHAGVLLRYIPITAKRTTGIVSRGGSIMAQWCLFHHKENFLYTHFEEICEIMKQYDVSFSLGDGLRPGSIADANDEAQFSELETLGELTKIAWKHDVQVMIEGPGHVPMHLIKENMEKELDICQGAPFYTLGPLTTDIAPGYDHITSAIGAAMIGWFGTAMLCYVTPKEHLGLPNKDDVREGVITYKIAAHAADLAKGHKTAHQRDDALSKARFEFRWRDQFNLSLDPERAMEYHDETLPAEGAKTAHFCSMCGPKFCSMRISHDIREYAKENDLETTEAIEKGMKEKAKEFKETGSHLYQ</sequence>
<gene>
    <name evidence="1" type="primary">thiC</name>
    <name type="ordered locus">BALH_4725</name>
</gene>
<reference key="1">
    <citation type="journal article" date="2007" name="J. Bacteriol.">
        <title>The complete genome sequence of Bacillus thuringiensis Al Hakam.</title>
        <authorList>
            <person name="Challacombe J.F."/>
            <person name="Altherr M.R."/>
            <person name="Xie G."/>
            <person name="Bhotika S.S."/>
            <person name="Brown N."/>
            <person name="Bruce D."/>
            <person name="Campbell C.S."/>
            <person name="Campbell M.L."/>
            <person name="Chen J."/>
            <person name="Chertkov O."/>
            <person name="Cleland C."/>
            <person name="Dimitrijevic M."/>
            <person name="Doggett N.A."/>
            <person name="Fawcett J.J."/>
            <person name="Glavina T."/>
            <person name="Goodwin L.A."/>
            <person name="Green L.D."/>
            <person name="Han C.S."/>
            <person name="Hill K.K."/>
            <person name="Hitchcock P."/>
            <person name="Jackson P.J."/>
            <person name="Keim P."/>
            <person name="Kewalramani A.R."/>
            <person name="Longmire J."/>
            <person name="Lucas S."/>
            <person name="Malfatti S."/>
            <person name="Martinez D."/>
            <person name="McMurry K."/>
            <person name="Meincke L.J."/>
            <person name="Misra M."/>
            <person name="Moseman B.L."/>
            <person name="Mundt M."/>
            <person name="Munk A.C."/>
            <person name="Okinaka R.T."/>
            <person name="Parson-Quintana B."/>
            <person name="Reilly L.P."/>
            <person name="Richardson P."/>
            <person name="Robinson D.L."/>
            <person name="Saunders E."/>
            <person name="Tapia R."/>
            <person name="Tesmer J.G."/>
            <person name="Thayer N."/>
            <person name="Thompson L.S."/>
            <person name="Tice H."/>
            <person name="Ticknor L.O."/>
            <person name="Wills P.L."/>
            <person name="Gilna P."/>
            <person name="Brettin T.S."/>
        </authorList>
    </citation>
    <scope>NUCLEOTIDE SEQUENCE [LARGE SCALE GENOMIC DNA]</scope>
    <source>
        <strain>Al Hakam</strain>
    </source>
</reference>
<dbReference type="EC" id="4.1.99.17" evidence="1"/>
<dbReference type="EMBL" id="CP000485">
    <property type="protein sequence ID" value="ABK87910.1"/>
    <property type="molecule type" value="Genomic_DNA"/>
</dbReference>
<dbReference type="RefSeq" id="WP_000814465.1">
    <property type="nucleotide sequence ID" value="NC_008600.1"/>
</dbReference>
<dbReference type="SMR" id="A0RL17"/>
<dbReference type="KEGG" id="btl:BALH_4725"/>
<dbReference type="HOGENOM" id="CLU_013181_2_1_9"/>
<dbReference type="UniPathway" id="UPA00060"/>
<dbReference type="GO" id="GO:0005829">
    <property type="term" value="C:cytosol"/>
    <property type="evidence" value="ECO:0007669"/>
    <property type="project" value="TreeGrafter"/>
</dbReference>
<dbReference type="GO" id="GO:0051539">
    <property type="term" value="F:4 iron, 4 sulfur cluster binding"/>
    <property type="evidence" value="ECO:0007669"/>
    <property type="project" value="UniProtKB-KW"/>
</dbReference>
<dbReference type="GO" id="GO:0016830">
    <property type="term" value="F:carbon-carbon lyase activity"/>
    <property type="evidence" value="ECO:0007669"/>
    <property type="project" value="InterPro"/>
</dbReference>
<dbReference type="GO" id="GO:0008270">
    <property type="term" value="F:zinc ion binding"/>
    <property type="evidence" value="ECO:0007669"/>
    <property type="project" value="UniProtKB-UniRule"/>
</dbReference>
<dbReference type="GO" id="GO:0009228">
    <property type="term" value="P:thiamine biosynthetic process"/>
    <property type="evidence" value="ECO:0007669"/>
    <property type="project" value="UniProtKB-KW"/>
</dbReference>
<dbReference type="GO" id="GO:0009229">
    <property type="term" value="P:thiamine diphosphate biosynthetic process"/>
    <property type="evidence" value="ECO:0007669"/>
    <property type="project" value="UniProtKB-UniRule"/>
</dbReference>
<dbReference type="FunFam" id="3.20.20.540:FF:000001">
    <property type="entry name" value="Phosphomethylpyrimidine synthase"/>
    <property type="match status" value="1"/>
</dbReference>
<dbReference type="Gene3D" id="6.10.250.620">
    <property type="match status" value="1"/>
</dbReference>
<dbReference type="Gene3D" id="3.20.20.540">
    <property type="entry name" value="Radical SAM ThiC family, central domain"/>
    <property type="match status" value="1"/>
</dbReference>
<dbReference type="HAMAP" id="MF_00089">
    <property type="entry name" value="ThiC"/>
    <property type="match status" value="1"/>
</dbReference>
<dbReference type="InterPro" id="IPR037509">
    <property type="entry name" value="ThiC"/>
</dbReference>
<dbReference type="InterPro" id="IPR025747">
    <property type="entry name" value="ThiC-associated_dom"/>
</dbReference>
<dbReference type="InterPro" id="IPR038521">
    <property type="entry name" value="ThiC/Bza_core_dom"/>
</dbReference>
<dbReference type="InterPro" id="IPR002817">
    <property type="entry name" value="ThiC/BzaA/B"/>
</dbReference>
<dbReference type="NCBIfam" id="NF006763">
    <property type="entry name" value="PRK09284.1"/>
    <property type="match status" value="1"/>
</dbReference>
<dbReference type="NCBIfam" id="NF009895">
    <property type="entry name" value="PRK13352.1"/>
    <property type="match status" value="1"/>
</dbReference>
<dbReference type="NCBIfam" id="TIGR00190">
    <property type="entry name" value="thiC"/>
    <property type="match status" value="1"/>
</dbReference>
<dbReference type="PANTHER" id="PTHR30557:SF1">
    <property type="entry name" value="PHOSPHOMETHYLPYRIMIDINE SYNTHASE, CHLOROPLASTIC"/>
    <property type="match status" value="1"/>
</dbReference>
<dbReference type="PANTHER" id="PTHR30557">
    <property type="entry name" value="THIAMINE BIOSYNTHESIS PROTEIN THIC"/>
    <property type="match status" value="1"/>
</dbReference>
<dbReference type="Pfam" id="PF13667">
    <property type="entry name" value="ThiC-associated"/>
    <property type="match status" value="1"/>
</dbReference>
<dbReference type="Pfam" id="PF01964">
    <property type="entry name" value="ThiC_Rad_SAM"/>
    <property type="match status" value="1"/>
</dbReference>
<dbReference type="SFLD" id="SFLDF00407">
    <property type="entry name" value="phosphomethylpyrimidine_syntha"/>
    <property type="match status" value="1"/>
</dbReference>
<dbReference type="SFLD" id="SFLDG01114">
    <property type="entry name" value="phosphomethylpyrimidine_syntha"/>
    <property type="match status" value="1"/>
</dbReference>
<dbReference type="SFLD" id="SFLDS00113">
    <property type="entry name" value="Radical_SAM_Phosphomethylpyrim"/>
    <property type="match status" value="1"/>
</dbReference>
<proteinExistence type="inferred from homology"/>
<evidence type="ECO:0000255" key="1">
    <source>
        <dbReference type="HAMAP-Rule" id="MF_00089"/>
    </source>
</evidence>
<evidence type="ECO:0000256" key="2">
    <source>
        <dbReference type="SAM" id="MobiDB-lite"/>
    </source>
</evidence>
<organism>
    <name type="scientific">Bacillus thuringiensis (strain Al Hakam)</name>
    <dbReference type="NCBI Taxonomy" id="412694"/>
    <lineage>
        <taxon>Bacteria</taxon>
        <taxon>Bacillati</taxon>
        <taxon>Bacillota</taxon>
        <taxon>Bacilli</taxon>
        <taxon>Bacillales</taxon>
        <taxon>Bacillaceae</taxon>
        <taxon>Bacillus</taxon>
        <taxon>Bacillus cereus group</taxon>
    </lineage>
</organism>
<name>THIC_BACAH</name>
<protein>
    <recommendedName>
        <fullName evidence="1">Phosphomethylpyrimidine synthase</fullName>
        <ecNumber evidence="1">4.1.99.17</ecNumber>
    </recommendedName>
    <alternativeName>
        <fullName evidence="1">Hydroxymethylpyrimidine phosphate synthase</fullName>
        <shortName evidence="1">HMP-P synthase</shortName>
        <shortName evidence="1">HMP-phosphate synthase</shortName>
        <shortName evidence="1">HMPP synthase</shortName>
    </alternativeName>
    <alternativeName>
        <fullName evidence="1">Thiamine biosynthesis protein ThiC</fullName>
    </alternativeName>
</protein>
<keyword id="KW-0004">4Fe-4S</keyword>
<keyword id="KW-0408">Iron</keyword>
<keyword id="KW-0411">Iron-sulfur</keyword>
<keyword id="KW-0456">Lyase</keyword>
<keyword id="KW-0479">Metal-binding</keyword>
<keyword id="KW-0949">S-adenosyl-L-methionine</keyword>
<keyword id="KW-0784">Thiamine biosynthesis</keyword>
<keyword id="KW-0862">Zinc</keyword>
<accession>A0RL17</accession>
<feature type="chain" id="PRO_1000004733" description="Phosphomethylpyrimidine synthase">
    <location>
        <begin position="1"/>
        <end position="586"/>
    </location>
</feature>
<feature type="region of interest" description="Disordered" evidence="2">
    <location>
        <begin position="1"/>
        <end position="58"/>
    </location>
</feature>
<feature type="compositionally biased region" description="Basic and acidic residues" evidence="2">
    <location>
        <begin position="22"/>
        <end position="39"/>
    </location>
</feature>
<feature type="binding site" evidence="1">
    <location>
        <position position="193"/>
    </location>
    <ligand>
        <name>substrate</name>
    </ligand>
</feature>
<feature type="binding site" evidence="1">
    <location>
        <position position="222"/>
    </location>
    <ligand>
        <name>substrate</name>
    </ligand>
</feature>
<feature type="binding site" evidence="1">
    <location>
        <position position="251"/>
    </location>
    <ligand>
        <name>substrate</name>
    </ligand>
</feature>
<feature type="binding site" evidence="1">
    <location>
        <position position="287"/>
    </location>
    <ligand>
        <name>substrate</name>
    </ligand>
</feature>
<feature type="binding site" evidence="1">
    <location>
        <begin position="307"/>
        <end position="309"/>
    </location>
    <ligand>
        <name>substrate</name>
    </ligand>
</feature>
<feature type="binding site" evidence="1">
    <location>
        <begin position="348"/>
        <end position="351"/>
    </location>
    <ligand>
        <name>substrate</name>
    </ligand>
</feature>
<feature type="binding site" evidence="1">
    <location>
        <position position="387"/>
    </location>
    <ligand>
        <name>substrate</name>
    </ligand>
</feature>
<feature type="binding site" evidence="1">
    <location>
        <position position="391"/>
    </location>
    <ligand>
        <name>Zn(2+)</name>
        <dbReference type="ChEBI" id="CHEBI:29105"/>
    </ligand>
</feature>
<feature type="binding site" evidence="1">
    <location>
        <position position="414"/>
    </location>
    <ligand>
        <name>substrate</name>
    </ligand>
</feature>
<feature type="binding site" evidence="1">
    <location>
        <position position="455"/>
    </location>
    <ligand>
        <name>Zn(2+)</name>
        <dbReference type="ChEBI" id="CHEBI:29105"/>
    </ligand>
</feature>
<feature type="binding site" evidence="1">
    <location>
        <position position="535"/>
    </location>
    <ligand>
        <name>[4Fe-4S] cluster</name>
        <dbReference type="ChEBI" id="CHEBI:49883"/>
        <note>4Fe-4S-S-AdoMet</note>
    </ligand>
</feature>
<feature type="binding site" evidence="1">
    <location>
        <position position="538"/>
    </location>
    <ligand>
        <name>[4Fe-4S] cluster</name>
        <dbReference type="ChEBI" id="CHEBI:49883"/>
        <note>4Fe-4S-S-AdoMet</note>
    </ligand>
</feature>
<feature type="binding site" evidence="1">
    <location>
        <position position="543"/>
    </location>
    <ligand>
        <name>[4Fe-4S] cluster</name>
        <dbReference type="ChEBI" id="CHEBI:49883"/>
        <note>4Fe-4S-S-AdoMet</note>
    </ligand>
</feature>
<comment type="function">
    <text evidence="1">Catalyzes the synthesis of the hydroxymethylpyrimidine phosphate (HMP-P) moiety of thiamine from aminoimidazole ribotide (AIR) in a radical S-adenosyl-L-methionine (SAM)-dependent reaction.</text>
</comment>
<comment type="catalytic activity">
    <reaction evidence="1">
        <text>5-amino-1-(5-phospho-beta-D-ribosyl)imidazole + S-adenosyl-L-methionine = 4-amino-2-methyl-5-(phosphooxymethyl)pyrimidine + CO + 5'-deoxyadenosine + formate + L-methionine + 3 H(+)</text>
        <dbReference type="Rhea" id="RHEA:24840"/>
        <dbReference type="ChEBI" id="CHEBI:15378"/>
        <dbReference type="ChEBI" id="CHEBI:15740"/>
        <dbReference type="ChEBI" id="CHEBI:17245"/>
        <dbReference type="ChEBI" id="CHEBI:17319"/>
        <dbReference type="ChEBI" id="CHEBI:57844"/>
        <dbReference type="ChEBI" id="CHEBI:58354"/>
        <dbReference type="ChEBI" id="CHEBI:59789"/>
        <dbReference type="ChEBI" id="CHEBI:137981"/>
        <dbReference type="EC" id="4.1.99.17"/>
    </reaction>
</comment>
<comment type="cofactor">
    <cofactor evidence="1">
        <name>[4Fe-4S] cluster</name>
        <dbReference type="ChEBI" id="CHEBI:49883"/>
    </cofactor>
    <text evidence="1">Binds 1 [4Fe-4S] cluster per subunit. The cluster is coordinated with 3 cysteines and an exchangeable S-adenosyl-L-methionine.</text>
</comment>
<comment type="pathway">
    <text evidence="1">Cofactor biosynthesis; thiamine diphosphate biosynthesis.</text>
</comment>
<comment type="similarity">
    <text evidence="1">Belongs to the ThiC family.</text>
</comment>